<sequence length="221" mass="25217">MNVRIDQSWKNKLDNEFEKEYFENLITYIKDEYSEHKCFPPGNEIFAAFDYSSFEDTKVVILGQDPYHGIGQANGLCFSVKDGVAFPPSLINIFKEIESDLNKPIPSTGNLERWANQGVLLLNATLSVRAHQAGSHQNKGWETFTDQVIRIVSETKENVVFLLWGGYAKKKTKLIDNSKHLILTSGHPSPLSANRGYWFGNKHFSKTNEYLKSQGEQPIEW</sequence>
<protein>
    <recommendedName>
        <fullName evidence="1">Uracil-DNA glycosylase</fullName>
        <shortName evidence="1">UDG</shortName>
        <ecNumber evidence="1">3.2.2.27</ecNumber>
    </recommendedName>
</protein>
<keyword id="KW-0963">Cytoplasm</keyword>
<keyword id="KW-0227">DNA damage</keyword>
<keyword id="KW-0234">DNA repair</keyword>
<keyword id="KW-0378">Hydrolase</keyword>
<name>UNG_CHRFK</name>
<comment type="function">
    <text evidence="1">Excises uracil residues from the DNA which can arise as a result of misincorporation of dUMP residues by DNA polymerase or due to deamination of cytosine.</text>
</comment>
<comment type="catalytic activity">
    <reaction evidence="1">
        <text>Hydrolyzes single-stranded DNA or mismatched double-stranded DNA and polynucleotides, releasing free uracil.</text>
        <dbReference type="EC" id="3.2.2.27"/>
    </reaction>
</comment>
<comment type="subcellular location">
    <subcellularLocation>
        <location evidence="1">Cytoplasm</location>
    </subcellularLocation>
</comment>
<comment type="similarity">
    <text evidence="1">Belongs to the uracil-DNA glycosylase (UDG) superfamily. UNG family.</text>
</comment>
<gene>
    <name evidence="1" type="primary">ung</name>
    <name type="ordered locus">GFO_1623</name>
</gene>
<proteinExistence type="inferred from homology"/>
<accession>A0M1V1</accession>
<feature type="chain" id="PRO_1000009895" description="Uracil-DNA glycosylase">
    <location>
        <begin position="1"/>
        <end position="221"/>
    </location>
</feature>
<feature type="active site" description="Proton acceptor" evidence="1">
    <location>
        <position position="65"/>
    </location>
</feature>
<evidence type="ECO:0000255" key="1">
    <source>
        <dbReference type="HAMAP-Rule" id="MF_00148"/>
    </source>
</evidence>
<reference key="1">
    <citation type="journal article" date="2006" name="Environ. Microbiol.">
        <title>Whole genome analysis of the marine Bacteroidetes'Gramella forsetii' reveals adaptations to degradation of polymeric organic matter.</title>
        <authorList>
            <person name="Bauer M."/>
            <person name="Kube M."/>
            <person name="Teeling H."/>
            <person name="Richter M."/>
            <person name="Lombardot T."/>
            <person name="Allers E."/>
            <person name="Wuerdemann C.A."/>
            <person name="Quast C."/>
            <person name="Kuhl H."/>
            <person name="Knaust F."/>
            <person name="Woebken D."/>
            <person name="Bischof K."/>
            <person name="Mussmann M."/>
            <person name="Choudhuri J.V."/>
            <person name="Meyer F."/>
            <person name="Reinhardt R."/>
            <person name="Amann R.I."/>
            <person name="Gloeckner F.O."/>
        </authorList>
    </citation>
    <scope>NUCLEOTIDE SEQUENCE [LARGE SCALE GENOMIC DNA]</scope>
    <source>
        <strain>DSM 17595 / CGMCC 1.15422 / KT0803</strain>
    </source>
</reference>
<dbReference type="EC" id="3.2.2.27" evidence="1"/>
<dbReference type="EMBL" id="CU207366">
    <property type="protein sequence ID" value="CAL66596.1"/>
    <property type="molecule type" value="Genomic_DNA"/>
</dbReference>
<dbReference type="RefSeq" id="WP_011709504.1">
    <property type="nucleotide sequence ID" value="NC_008571.1"/>
</dbReference>
<dbReference type="SMR" id="A0M1V1"/>
<dbReference type="STRING" id="411154.GFO_1623"/>
<dbReference type="KEGG" id="gfo:GFO_1623"/>
<dbReference type="eggNOG" id="COG0692">
    <property type="taxonomic scope" value="Bacteria"/>
</dbReference>
<dbReference type="HOGENOM" id="CLU_032162_3_0_10"/>
<dbReference type="OrthoDB" id="9804372at2"/>
<dbReference type="Proteomes" id="UP000000755">
    <property type="component" value="Chromosome"/>
</dbReference>
<dbReference type="GO" id="GO:0005737">
    <property type="term" value="C:cytoplasm"/>
    <property type="evidence" value="ECO:0007669"/>
    <property type="project" value="UniProtKB-SubCell"/>
</dbReference>
<dbReference type="GO" id="GO:0004844">
    <property type="term" value="F:uracil DNA N-glycosylase activity"/>
    <property type="evidence" value="ECO:0007669"/>
    <property type="project" value="UniProtKB-UniRule"/>
</dbReference>
<dbReference type="GO" id="GO:0097510">
    <property type="term" value="P:base-excision repair, AP site formation via deaminated base removal"/>
    <property type="evidence" value="ECO:0007669"/>
    <property type="project" value="TreeGrafter"/>
</dbReference>
<dbReference type="CDD" id="cd10027">
    <property type="entry name" value="UDG-F1-like"/>
    <property type="match status" value="1"/>
</dbReference>
<dbReference type="FunFam" id="3.40.470.10:FF:000001">
    <property type="entry name" value="Uracil-DNA glycosylase"/>
    <property type="match status" value="1"/>
</dbReference>
<dbReference type="Gene3D" id="3.40.470.10">
    <property type="entry name" value="Uracil-DNA glycosylase-like domain"/>
    <property type="match status" value="1"/>
</dbReference>
<dbReference type="HAMAP" id="MF_00148">
    <property type="entry name" value="UDG"/>
    <property type="match status" value="1"/>
</dbReference>
<dbReference type="InterPro" id="IPR002043">
    <property type="entry name" value="UDG_fam1"/>
</dbReference>
<dbReference type="InterPro" id="IPR018085">
    <property type="entry name" value="Ura-DNA_Glyclase_AS"/>
</dbReference>
<dbReference type="InterPro" id="IPR005122">
    <property type="entry name" value="Uracil-DNA_glycosylase-like"/>
</dbReference>
<dbReference type="InterPro" id="IPR036895">
    <property type="entry name" value="Uracil-DNA_glycosylase-like_sf"/>
</dbReference>
<dbReference type="NCBIfam" id="NF003588">
    <property type="entry name" value="PRK05254.1-1"/>
    <property type="match status" value="1"/>
</dbReference>
<dbReference type="NCBIfam" id="NF003589">
    <property type="entry name" value="PRK05254.1-2"/>
    <property type="match status" value="1"/>
</dbReference>
<dbReference type="NCBIfam" id="NF003591">
    <property type="entry name" value="PRK05254.1-4"/>
    <property type="match status" value="1"/>
</dbReference>
<dbReference type="NCBIfam" id="NF003592">
    <property type="entry name" value="PRK05254.1-5"/>
    <property type="match status" value="1"/>
</dbReference>
<dbReference type="NCBIfam" id="TIGR00628">
    <property type="entry name" value="ung"/>
    <property type="match status" value="1"/>
</dbReference>
<dbReference type="PANTHER" id="PTHR11264">
    <property type="entry name" value="URACIL-DNA GLYCOSYLASE"/>
    <property type="match status" value="1"/>
</dbReference>
<dbReference type="PANTHER" id="PTHR11264:SF0">
    <property type="entry name" value="URACIL-DNA GLYCOSYLASE"/>
    <property type="match status" value="1"/>
</dbReference>
<dbReference type="Pfam" id="PF03167">
    <property type="entry name" value="UDG"/>
    <property type="match status" value="1"/>
</dbReference>
<dbReference type="SMART" id="SM00986">
    <property type="entry name" value="UDG"/>
    <property type="match status" value="1"/>
</dbReference>
<dbReference type="SMART" id="SM00987">
    <property type="entry name" value="UreE_C"/>
    <property type="match status" value="1"/>
</dbReference>
<dbReference type="SUPFAM" id="SSF52141">
    <property type="entry name" value="Uracil-DNA glycosylase-like"/>
    <property type="match status" value="1"/>
</dbReference>
<dbReference type="PROSITE" id="PS00130">
    <property type="entry name" value="U_DNA_GLYCOSYLASE"/>
    <property type="match status" value="1"/>
</dbReference>
<organism>
    <name type="scientific">Christiangramia forsetii (strain DSM 17595 / CGMCC 1.15422 / KT0803)</name>
    <name type="common">Gramella forsetii</name>
    <dbReference type="NCBI Taxonomy" id="411154"/>
    <lineage>
        <taxon>Bacteria</taxon>
        <taxon>Pseudomonadati</taxon>
        <taxon>Bacteroidota</taxon>
        <taxon>Flavobacteriia</taxon>
        <taxon>Flavobacteriales</taxon>
        <taxon>Flavobacteriaceae</taxon>
        <taxon>Christiangramia</taxon>
    </lineage>
</organism>